<reference key="1">
    <citation type="journal article" date="2019" name="J. Venom. Anim. Toxins Incl. Trop. Dis.">
        <title>Subproteome of Lachesis muta rhombeata venom and preliminary studies on LmrSP-4, a novel snake venom serine proteinase.</title>
        <authorList>
            <person name="Wiezel G.A."/>
            <person name="Bordon K.C."/>
            <person name="Silva R.R."/>
            <person name="Gomes M.S."/>
            <person name="Cabral H."/>
            <person name="Rodrigues V.M."/>
            <person name="Ueberheide B."/>
            <person name="Arantes E.C."/>
        </authorList>
    </citation>
    <scope>PROTEIN SEQUENCE</scope>
    <scope>FUNCTION</scope>
    <scope>ACTIVITY REGULATION</scope>
    <scope>BIOPHYSICOCHEMICAL PROPERTIES</scope>
    <scope>SUBCELLULAR LOCATION</scope>
    <scope>MASS SPECTROMETRY</scope>
    <scope>GLYCOSYLATION</scope>
    <source>
        <tissue>Venom</tissue>
    </source>
</reference>
<organism>
    <name type="scientific">Lachesis muta rhombeata</name>
    <name type="common">Bushmaster</name>
    <dbReference type="NCBI Taxonomy" id="60219"/>
    <lineage>
        <taxon>Eukaryota</taxon>
        <taxon>Metazoa</taxon>
        <taxon>Chordata</taxon>
        <taxon>Craniata</taxon>
        <taxon>Vertebrata</taxon>
        <taxon>Euteleostomi</taxon>
        <taxon>Lepidosauria</taxon>
        <taxon>Squamata</taxon>
        <taxon>Bifurcata</taxon>
        <taxon>Unidentata</taxon>
        <taxon>Episquamata</taxon>
        <taxon>Toxicofera</taxon>
        <taxon>Serpentes</taxon>
        <taxon>Colubroidea</taxon>
        <taxon>Viperidae</taxon>
        <taxon>Crotalinae</taxon>
        <taxon>Lachesis</taxon>
    </lineage>
</organism>
<sequence>VFGGDECNINEHRSLVVLFDSDGFLCAGTLINKEWVLTAAHCDSENFQMQLGV</sequence>
<name>VSP4_LACMR</name>
<protein>
    <recommendedName>
        <fullName evidence="5">Snake venom serine protease LmrSP-4</fullName>
        <shortName evidence="6">SVSP</shortName>
        <ecNumber evidence="4">3.4.21.-</ecNumber>
    </recommendedName>
</protein>
<accession>C0HLA3</accession>
<evidence type="ECO:0000250" key="1">
    <source>
        <dbReference type="UniProtKB" id="Q27J47"/>
    </source>
</evidence>
<evidence type="ECO:0000255" key="2">
    <source>
        <dbReference type="PROSITE-ProRule" id="PRU00274"/>
    </source>
</evidence>
<evidence type="ECO:0000255" key="3">
    <source>
        <dbReference type="PROSITE-ProRule" id="PRU10078"/>
    </source>
</evidence>
<evidence type="ECO:0000269" key="4">
    <source>
    </source>
</evidence>
<evidence type="ECO:0000303" key="5">
    <source>
    </source>
</evidence>
<evidence type="ECO:0000305" key="6"/>
<evidence type="ECO:0000305" key="7">
    <source>
    </source>
</evidence>
<feature type="chain" id="PRO_0000447684" description="Snake venom serine protease LmrSP-4" evidence="4">
    <location>
        <begin position="1"/>
        <end position="53" status="greater than"/>
    </location>
</feature>
<feature type="active site" description="Charge relay system" evidence="3">
    <location>
        <position position="41"/>
    </location>
</feature>
<feature type="disulfide bond" evidence="2">
    <location>
        <begin position="26"/>
        <end position="42"/>
    </location>
</feature>
<feature type="non-terminal residue" evidence="7">
    <location>
        <position position="53"/>
    </location>
</feature>
<proteinExistence type="evidence at protein level"/>
<keyword id="KW-0903">Direct protein sequencing</keyword>
<keyword id="KW-1015">Disulfide bond</keyword>
<keyword id="KW-1206">Fibrinogenolytic toxin</keyword>
<keyword id="KW-0325">Glycoprotein</keyword>
<keyword id="KW-1199">Hemostasis impairing toxin</keyword>
<keyword id="KW-0378">Hydrolase</keyword>
<keyword id="KW-0645">Protease</keyword>
<keyword id="KW-0964">Secreted</keyword>
<keyword id="KW-0720">Serine protease</keyword>
<keyword id="KW-0800">Toxin</keyword>
<comment type="function">
    <text evidence="4">Snake venom serine protease that has fibrinogenolytic activity. Hydrolyzes the alpha-chain of fibrinogen (FGA), without affecting the beta- and the gamma-chains. Also displays hydrolytic activity towards S-2302 (plasma kallikrein substrate) and S-2251 (substrate for plasmin), but has no hydrolytic activity with S-2238 (thrombin substrate) or S-2222 (factor Xa).</text>
</comment>
<comment type="activity regulation">
    <text evidence="4">Inhibited by the small molecule serine protease inhibitors phenylmethylsulfonyl fluoride (PMSF) and benzamidine.</text>
</comment>
<comment type="biophysicochemical properties">
    <phDependence>
        <text evidence="4">Optimum pH is between 7-8 (at 40 degrees Celsius).</text>
    </phDependence>
    <temperatureDependence>
        <text evidence="4">Optimum temperature is between 40 and 55 degrees Celsius (at pH 7). Activity decreases at 60 degrees Celsius.</text>
    </temperatureDependence>
</comment>
<comment type="subunit">
    <text evidence="1">Monomer.</text>
</comment>
<comment type="subcellular location">
    <subcellularLocation>
        <location evidence="4">Secreted</location>
    </subcellularLocation>
</comment>
<comment type="tissue specificity">
    <text evidence="7">Expressed by the venom gland.</text>
</comment>
<comment type="PTM">
    <text evidence="4">N-glycosylated.</text>
</comment>
<comment type="mass spectrometry"/>
<comment type="similarity">
    <text evidence="6">Belongs to the peptidase S1 family. Snake venom subfamily.</text>
</comment>
<dbReference type="EC" id="3.4.21.-" evidence="4"/>
<dbReference type="SMR" id="C0HLA3"/>
<dbReference type="GO" id="GO:0005576">
    <property type="term" value="C:extracellular region"/>
    <property type="evidence" value="ECO:0007669"/>
    <property type="project" value="UniProtKB-SubCell"/>
</dbReference>
<dbReference type="GO" id="GO:0030141">
    <property type="term" value="C:secretory granule"/>
    <property type="evidence" value="ECO:0007669"/>
    <property type="project" value="TreeGrafter"/>
</dbReference>
<dbReference type="GO" id="GO:0004252">
    <property type="term" value="F:serine-type endopeptidase activity"/>
    <property type="evidence" value="ECO:0007669"/>
    <property type="project" value="InterPro"/>
</dbReference>
<dbReference type="GO" id="GO:0090729">
    <property type="term" value="F:toxin activity"/>
    <property type="evidence" value="ECO:0007669"/>
    <property type="project" value="UniProtKB-KW"/>
</dbReference>
<dbReference type="GO" id="GO:0006508">
    <property type="term" value="P:proteolysis"/>
    <property type="evidence" value="ECO:0007669"/>
    <property type="project" value="UniProtKB-KW"/>
</dbReference>
<dbReference type="Gene3D" id="2.40.10.10">
    <property type="entry name" value="Trypsin-like serine proteases"/>
    <property type="match status" value="1"/>
</dbReference>
<dbReference type="InterPro" id="IPR009003">
    <property type="entry name" value="Peptidase_S1_PA"/>
</dbReference>
<dbReference type="InterPro" id="IPR043504">
    <property type="entry name" value="Peptidase_S1_PA_chymotrypsin"/>
</dbReference>
<dbReference type="InterPro" id="IPR001254">
    <property type="entry name" value="Trypsin_dom"/>
</dbReference>
<dbReference type="InterPro" id="IPR018114">
    <property type="entry name" value="TRYPSIN_HIS"/>
</dbReference>
<dbReference type="PANTHER" id="PTHR24271:SF47">
    <property type="entry name" value="KALLIKREIN-1"/>
    <property type="match status" value="1"/>
</dbReference>
<dbReference type="PANTHER" id="PTHR24271">
    <property type="entry name" value="KALLIKREIN-RELATED"/>
    <property type="match status" value="1"/>
</dbReference>
<dbReference type="Pfam" id="PF00089">
    <property type="entry name" value="Trypsin"/>
    <property type="match status" value="1"/>
</dbReference>
<dbReference type="SUPFAM" id="SSF50494">
    <property type="entry name" value="Trypsin-like serine proteases"/>
    <property type="match status" value="1"/>
</dbReference>
<dbReference type="PROSITE" id="PS00134">
    <property type="entry name" value="TRYPSIN_HIS"/>
    <property type="match status" value="1"/>
</dbReference>